<dbReference type="EMBL" id="CP000356">
    <property type="protein sequence ID" value="ABF52422.1"/>
    <property type="molecule type" value="Genomic_DNA"/>
</dbReference>
<dbReference type="RefSeq" id="WP_011541012.1">
    <property type="nucleotide sequence ID" value="NC_008048.1"/>
</dbReference>
<dbReference type="SMR" id="Q1GVA0"/>
<dbReference type="KEGG" id="sal:Sala_0701"/>
<dbReference type="eggNOG" id="COG1742">
    <property type="taxonomic scope" value="Bacteria"/>
</dbReference>
<dbReference type="HOGENOM" id="CLU_117653_1_0_5"/>
<dbReference type="OrthoDB" id="123240at2"/>
<dbReference type="Proteomes" id="UP000006578">
    <property type="component" value="Chromosome"/>
</dbReference>
<dbReference type="GO" id="GO:0005886">
    <property type="term" value="C:plasma membrane"/>
    <property type="evidence" value="ECO:0007669"/>
    <property type="project" value="UniProtKB-SubCell"/>
</dbReference>
<dbReference type="HAMAP" id="MF_00010">
    <property type="entry name" value="UPF0060"/>
    <property type="match status" value="1"/>
</dbReference>
<dbReference type="InterPro" id="IPR003844">
    <property type="entry name" value="UPF0060"/>
</dbReference>
<dbReference type="NCBIfam" id="NF002586">
    <property type="entry name" value="PRK02237.1"/>
    <property type="match status" value="1"/>
</dbReference>
<dbReference type="PANTHER" id="PTHR36116">
    <property type="entry name" value="UPF0060 MEMBRANE PROTEIN YNFA"/>
    <property type="match status" value="1"/>
</dbReference>
<dbReference type="PANTHER" id="PTHR36116:SF1">
    <property type="entry name" value="UPF0060 MEMBRANE PROTEIN YNFA"/>
    <property type="match status" value="1"/>
</dbReference>
<dbReference type="Pfam" id="PF02694">
    <property type="entry name" value="UPF0060"/>
    <property type="match status" value="1"/>
</dbReference>
<dbReference type="SUPFAM" id="SSF103481">
    <property type="entry name" value="Multidrug resistance efflux transporter EmrE"/>
    <property type="match status" value="1"/>
</dbReference>
<feature type="chain" id="PRO_0000282268" description="UPF0060 membrane protein Sala_0701">
    <location>
        <begin position="1"/>
        <end position="107"/>
    </location>
</feature>
<feature type="transmembrane region" description="Helical" evidence="1">
    <location>
        <begin position="4"/>
        <end position="24"/>
    </location>
</feature>
<feature type="transmembrane region" description="Helical" evidence="1">
    <location>
        <begin position="30"/>
        <end position="50"/>
    </location>
</feature>
<feature type="transmembrane region" description="Helical" evidence="1">
    <location>
        <begin position="60"/>
        <end position="80"/>
    </location>
</feature>
<feature type="transmembrane region" description="Helical" evidence="1">
    <location>
        <begin position="87"/>
        <end position="107"/>
    </location>
</feature>
<protein>
    <recommendedName>
        <fullName evidence="1">UPF0060 membrane protein Sala_0701</fullName>
    </recommendedName>
</protein>
<reference key="1">
    <citation type="journal article" date="2009" name="Proc. Natl. Acad. Sci. U.S.A.">
        <title>The genomic basis of trophic strategy in marine bacteria.</title>
        <authorList>
            <person name="Lauro F.M."/>
            <person name="McDougald D."/>
            <person name="Thomas T."/>
            <person name="Williams T.J."/>
            <person name="Egan S."/>
            <person name="Rice S."/>
            <person name="DeMaere M.Z."/>
            <person name="Ting L."/>
            <person name="Ertan H."/>
            <person name="Johnson J."/>
            <person name="Ferriera S."/>
            <person name="Lapidus A."/>
            <person name="Anderson I."/>
            <person name="Kyrpides N."/>
            <person name="Munk A.C."/>
            <person name="Detter C."/>
            <person name="Han C.S."/>
            <person name="Brown M.V."/>
            <person name="Robb F.T."/>
            <person name="Kjelleberg S."/>
            <person name="Cavicchioli R."/>
        </authorList>
    </citation>
    <scope>NUCLEOTIDE SEQUENCE [LARGE SCALE GENOMIC DNA]</scope>
    <source>
        <strain>DSM 13593 / LMG 18877 / RB2256</strain>
    </source>
</reference>
<name>Y701_SPHAL</name>
<evidence type="ECO:0000255" key="1">
    <source>
        <dbReference type="HAMAP-Rule" id="MF_00010"/>
    </source>
</evidence>
<comment type="subcellular location">
    <subcellularLocation>
        <location evidence="1">Cell inner membrane</location>
        <topology evidence="1">Multi-pass membrane protein</topology>
    </subcellularLocation>
</comment>
<comment type="similarity">
    <text evidence="1">Belongs to the UPF0060 family.</text>
</comment>
<proteinExistence type="inferred from homology"/>
<sequence>MTAFAYIGAALAEIAGCFAFWAWLRMDKSVWWVVPGIASLALFAYLLTLVEADHAGRTYAAYGGVYIAAALLWLWAVEGAKPDRWDLIGAAVCLGGAAIILFGPRGG</sequence>
<keyword id="KW-0997">Cell inner membrane</keyword>
<keyword id="KW-1003">Cell membrane</keyword>
<keyword id="KW-0472">Membrane</keyword>
<keyword id="KW-1185">Reference proteome</keyword>
<keyword id="KW-0812">Transmembrane</keyword>
<keyword id="KW-1133">Transmembrane helix</keyword>
<accession>Q1GVA0</accession>
<organism>
    <name type="scientific">Sphingopyxis alaskensis (strain DSM 13593 / LMG 18877 / RB2256)</name>
    <name type="common">Sphingomonas alaskensis</name>
    <dbReference type="NCBI Taxonomy" id="317655"/>
    <lineage>
        <taxon>Bacteria</taxon>
        <taxon>Pseudomonadati</taxon>
        <taxon>Pseudomonadota</taxon>
        <taxon>Alphaproteobacteria</taxon>
        <taxon>Sphingomonadales</taxon>
        <taxon>Sphingomonadaceae</taxon>
        <taxon>Sphingopyxis</taxon>
    </lineage>
</organism>
<gene>
    <name type="ordered locus">Sala_0701</name>
</gene>